<proteinExistence type="inferred from homology"/>
<gene>
    <name evidence="1" type="primary">xseB</name>
    <name type="ordered locus">SUB1275</name>
</gene>
<dbReference type="EC" id="3.1.11.6" evidence="1"/>
<dbReference type="EMBL" id="AM946015">
    <property type="protein sequence ID" value="CAR42778.1"/>
    <property type="molecule type" value="Genomic_DNA"/>
</dbReference>
<dbReference type="RefSeq" id="WP_012658749.1">
    <property type="nucleotide sequence ID" value="NC_012004.1"/>
</dbReference>
<dbReference type="SMR" id="B9DUT8"/>
<dbReference type="STRING" id="218495.SUB1275"/>
<dbReference type="KEGG" id="sub:SUB1275"/>
<dbReference type="eggNOG" id="COG1722">
    <property type="taxonomic scope" value="Bacteria"/>
</dbReference>
<dbReference type="HOGENOM" id="CLU_145918_3_2_9"/>
<dbReference type="OrthoDB" id="9798666at2"/>
<dbReference type="Proteomes" id="UP000000449">
    <property type="component" value="Chromosome"/>
</dbReference>
<dbReference type="GO" id="GO:0005829">
    <property type="term" value="C:cytosol"/>
    <property type="evidence" value="ECO:0007669"/>
    <property type="project" value="TreeGrafter"/>
</dbReference>
<dbReference type="GO" id="GO:0009318">
    <property type="term" value="C:exodeoxyribonuclease VII complex"/>
    <property type="evidence" value="ECO:0007669"/>
    <property type="project" value="InterPro"/>
</dbReference>
<dbReference type="GO" id="GO:0008855">
    <property type="term" value="F:exodeoxyribonuclease VII activity"/>
    <property type="evidence" value="ECO:0007669"/>
    <property type="project" value="UniProtKB-UniRule"/>
</dbReference>
<dbReference type="GO" id="GO:0006308">
    <property type="term" value="P:DNA catabolic process"/>
    <property type="evidence" value="ECO:0007669"/>
    <property type="project" value="UniProtKB-UniRule"/>
</dbReference>
<dbReference type="Gene3D" id="1.10.287.1040">
    <property type="entry name" value="Exonuclease VII, small subunit"/>
    <property type="match status" value="1"/>
</dbReference>
<dbReference type="HAMAP" id="MF_00337">
    <property type="entry name" value="Exonuc_7_S"/>
    <property type="match status" value="1"/>
</dbReference>
<dbReference type="InterPro" id="IPR003761">
    <property type="entry name" value="Exonuc_VII_S"/>
</dbReference>
<dbReference type="InterPro" id="IPR037004">
    <property type="entry name" value="Exonuc_VII_ssu_sf"/>
</dbReference>
<dbReference type="NCBIfam" id="NF002138">
    <property type="entry name" value="PRK00977.1-2"/>
    <property type="match status" value="1"/>
</dbReference>
<dbReference type="NCBIfam" id="TIGR01280">
    <property type="entry name" value="xseB"/>
    <property type="match status" value="1"/>
</dbReference>
<dbReference type="PANTHER" id="PTHR34137">
    <property type="entry name" value="EXODEOXYRIBONUCLEASE 7 SMALL SUBUNIT"/>
    <property type="match status" value="1"/>
</dbReference>
<dbReference type="PANTHER" id="PTHR34137:SF1">
    <property type="entry name" value="EXODEOXYRIBONUCLEASE 7 SMALL SUBUNIT"/>
    <property type="match status" value="1"/>
</dbReference>
<dbReference type="Pfam" id="PF02609">
    <property type="entry name" value="Exonuc_VII_S"/>
    <property type="match status" value="1"/>
</dbReference>
<dbReference type="PIRSF" id="PIRSF006488">
    <property type="entry name" value="Exonuc_VII_S"/>
    <property type="match status" value="1"/>
</dbReference>
<dbReference type="SUPFAM" id="SSF116842">
    <property type="entry name" value="XseB-like"/>
    <property type="match status" value="1"/>
</dbReference>
<sequence>MATKKTFEERLQELETIVSKLESGEVPLEEAIAEFQKGMILSKDLQKTLQNAEKTLVKVMQADGSEIEIED</sequence>
<accession>B9DUT8</accession>
<organism>
    <name type="scientific">Streptococcus uberis (strain ATCC BAA-854 / 0140J)</name>
    <dbReference type="NCBI Taxonomy" id="218495"/>
    <lineage>
        <taxon>Bacteria</taxon>
        <taxon>Bacillati</taxon>
        <taxon>Bacillota</taxon>
        <taxon>Bacilli</taxon>
        <taxon>Lactobacillales</taxon>
        <taxon>Streptococcaceae</taxon>
        <taxon>Streptococcus</taxon>
    </lineage>
</organism>
<reference key="1">
    <citation type="journal article" date="2009" name="BMC Genomics">
        <title>Evidence for niche adaptation in the genome of the bovine pathogen Streptococcus uberis.</title>
        <authorList>
            <person name="Ward P.N."/>
            <person name="Holden M.T.G."/>
            <person name="Leigh J.A."/>
            <person name="Lennard N."/>
            <person name="Bignell A."/>
            <person name="Barron A."/>
            <person name="Clark L."/>
            <person name="Quail M.A."/>
            <person name="Woodward J."/>
            <person name="Barrell B.G."/>
            <person name="Egan S.A."/>
            <person name="Field T.R."/>
            <person name="Maskell D."/>
            <person name="Kehoe M."/>
            <person name="Dowson C.G."/>
            <person name="Chanter N."/>
            <person name="Whatmore A.M."/>
            <person name="Bentley S.D."/>
            <person name="Parkhill J."/>
        </authorList>
    </citation>
    <scope>NUCLEOTIDE SEQUENCE [LARGE SCALE GENOMIC DNA]</scope>
    <source>
        <strain>ATCC BAA-854 / 0140J</strain>
    </source>
</reference>
<name>EX7S_STRU0</name>
<comment type="function">
    <text evidence="1">Bidirectionally degrades single-stranded DNA into large acid-insoluble oligonucleotides, which are then degraded further into small acid-soluble oligonucleotides.</text>
</comment>
<comment type="catalytic activity">
    <reaction evidence="1">
        <text>Exonucleolytic cleavage in either 5'- to 3'- or 3'- to 5'-direction to yield nucleoside 5'-phosphates.</text>
        <dbReference type="EC" id="3.1.11.6"/>
    </reaction>
</comment>
<comment type="subunit">
    <text evidence="1">Heterooligomer composed of large and small subunits.</text>
</comment>
<comment type="subcellular location">
    <subcellularLocation>
        <location evidence="1">Cytoplasm</location>
    </subcellularLocation>
</comment>
<comment type="similarity">
    <text evidence="1">Belongs to the XseB family.</text>
</comment>
<protein>
    <recommendedName>
        <fullName evidence="1">Exodeoxyribonuclease 7 small subunit</fullName>
        <ecNumber evidence="1">3.1.11.6</ecNumber>
    </recommendedName>
    <alternativeName>
        <fullName evidence="1">Exodeoxyribonuclease VII small subunit</fullName>
        <shortName evidence="1">Exonuclease VII small subunit</shortName>
    </alternativeName>
</protein>
<evidence type="ECO:0000255" key="1">
    <source>
        <dbReference type="HAMAP-Rule" id="MF_00337"/>
    </source>
</evidence>
<keyword id="KW-0963">Cytoplasm</keyword>
<keyword id="KW-0269">Exonuclease</keyword>
<keyword id="KW-0378">Hydrolase</keyword>
<keyword id="KW-0540">Nuclease</keyword>
<keyword id="KW-1185">Reference proteome</keyword>
<feature type="chain" id="PRO_1000200266" description="Exodeoxyribonuclease 7 small subunit">
    <location>
        <begin position="1"/>
        <end position="71"/>
    </location>
</feature>